<proteinExistence type="inferred from homology"/>
<keyword id="KW-0378">Hydrolase</keyword>
<keyword id="KW-0460">Magnesium</keyword>
<keyword id="KW-0464">Manganese</keyword>
<keyword id="KW-0479">Metal-binding</keyword>
<feature type="chain" id="PRO_1000147822" description="Uncharacterized Nudix hydrolase NudL">
    <location>
        <begin position="1"/>
        <end position="192"/>
    </location>
</feature>
<feature type="domain" description="Nudix hydrolase" evidence="1">
    <location>
        <begin position="29"/>
        <end position="160"/>
    </location>
</feature>
<feature type="short sequence motif" description="Nudix box">
    <location>
        <begin position="67"/>
        <end position="89"/>
    </location>
</feature>
<feature type="binding site" evidence="1">
    <location>
        <position position="83"/>
    </location>
    <ligand>
        <name>Mg(2+)</name>
        <dbReference type="ChEBI" id="CHEBI:18420"/>
    </ligand>
</feature>
<feature type="binding site" evidence="1">
    <location>
        <position position="87"/>
    </location>
    <ligand>
        <name>Mg(2+)</name>
        <dbReference type="ChEBI" id="CHEBI:18420"/>
    </ligand>
</feature>
<evidence type="ECO:0000255" key="1">
    <source>
        <dbReference type="HAMAP-Rule" id="MF_01592"/>
    </source>
</evidence>
<accession>B5FTK8</accession>
<comment type="function">
    <text evidence="1">Probably mediates the hydrolysis of some nucleoside diphosphate derivatives.</text>
</comment>
<comment type="cofactor">
    <cofactor evidence="1">
        <name>Mn(2+)</name>
        <dbReference type="ChEBI" id="CHEBI:29035"/>
    </cofactor>
    <cofactor evidence="1">
        <name>Mg(2+)</name>
        <dbReference type="ChEBI" id="CHEBI:18420"/>
    </cofactor>
</comment>
<comment type="similarity">
    <text evidence="1">Belongs to the Nudix hydrolase family. PCD1 subfamily.</text>
</comment>
<name>NUDL_SALDC</name>
<organism>
    <name type="scientific">Salmonella dublin (strain CT_02021853)</name>
    <dbReference type="NCBI Taxonomy" id="439851"/>
    <lineage>
        <taxon>Bacteria</taxon>
        <taxon>Pseudomonadati</taxon>
        <taxon>Pseudomonadota</taxon>
        <taxon>Gammaproteobacteria</taxon>
        <taxon>Enterobacterales</taxon>
        <taxon>Enterobacteriaceae</taxon>
        <taxon>Salmonella</taxon>
    </lineage>
</organism>
<gene>
    <name evidence="1" type="primary">nudL</name>
    <name type="ordered locus">SeD_A1491</name>
</gene>
<protein>
    <recommendedName>
        <fullName evidence="1">Uncharacterized Nudix hydrolase NudL</fullName>
        <ecNumber evidence="1">3.6.1.-</ecNumber>
    </recommendedName>
</protein>
<sequence>MDTSRLTLDHFLSRFQLLRPQMTHKTLNQRQAAVLIPVVRRPQPGLLLTQRAIHLRKHAGQVAFPGGAVDSTDASLIAAALREAQEEVAIPPQAVEVIGVLPPVDSVTGFQVTPVVGIIPPNLPWRASEDEVSAVFEMPLAQALQLGRYHPLDVYRRGNSHRVWLSWYEHYFVWGMTANILRELALQIGVKP</sequence>
<reference key="1">
    <citation type="journal article" date="2011" name="J. Bacteriol.">
        <title>Comparative genomics of 28 Salmonella enterica isolates: evidence for CRISPR-mediated adaptive sublineage evolution.</title>
        <authorList>
            <person name="Fricke W.F."/>
            <person name="Mammel M.K."/>
            <person name="McDermott P.F."/>
            <person name="Tartera C."/>
            <person name="White D.G."/>
            <person name="Leclerc J.E."/>
            <person name="Ravel J."/>
            <person name="Cebula T.A."/>
        </authorList>
    </citation>
    <scope>NUCLEOTIDE SEQUENCE [LARGE SCALE GENOMIC DNA]</scope>
    <source>
        <strain>CT_02021853</strain>
    </source>
</reference>
<dbReference type="EC" id="3.6.1.-" evidence="1"/>
<dbReference type="EMBL" id="CP001144">
    <property type="protein sequence ID" value="ACH73748.1"/>
    <property type="molecule type" value="Genomic_DNA"/>
</dbReference>
<dbReference type="RefSeq" id="WP_000381548.1">
    <property type="nucleotide sequence ID" value="NC_011205.1"/>
</dbReference>
<dbReference type="SMR" id="B5FTK8"/>
<dbReference type="KEGG" id="sed:SeD_A1491"/>
<dbReference type="HOGENOM" id="CLU_040940_5_2_6"/>
<dbReference type="Proteomes" id="UP000008322">
    <property type="component" value="Chromosome"/>
</dbReference>
<dbReference type="GO" id="GO:0010945">
    <property type="term" value="F:coenzyme A diphosphatase activity"/>
    <property type="evidence" value="ECO:0007669"/>
    <property type="project" value="InterPro"/>
</dbReference>
<dbReference type="GO" id="GO:0000287">
    <property type="term" value="F:magnesium ion binding"/>
    <property type="evidence" value="ECO:0007669"/>
    <property type="project" value="UniProtKB-UniRule"/>
</dbReference>
<dbReference type="GO" id="GO:0030145">
    <property type="term" value="F:manganese ion binding"/>
    <property type="evidence" value="ECO:0007669"/>
    <property type="project" value="UniProtKB-UniRule"/>
</dbReference>
<dbReference type="GO" id="GO:0009132">
    <property type="term" value="P:nucleoside diphosphate metabolic process"/>
    <property type="evidence" value="ECO:0007669"/>
    <property type="project" value="InterPro"/>
</dbReference>
<dbReference type="CDD" id="cd03426">
    <property type="entry name" value="NUDIX_CoAse_Nudt7"/>
    <property type="match status" value="1"/>
</dbReference>
<dbReference type="Gene3D" id="3.90.79.10">
    <property type="entry name" value="Nucleoside Triphosphate Pyrophosphohydrolase"/>
    <property type="match status" value="1"/>
</dbReference>
<dbReference type="HAMAP" id="MF_01592">
    <property type="entry name" value="Nudix_NudL"/>
    <property type="match status" value="1"/>
</dbReference>
<dbReference type="InterPro" id="IPR045121">
    <property type="entry name" value="CoAse"/>
</dbReference>
<dbReference type="InterPro" id="IPR015797">
    <property type="entry name" value="NUDIX_hydrolase-like_dom_sf"/>
</dbReference>
<dbReference type="InterPro" id="IPR000086">
    <property type="entry name" value="NUDIX_hydrolase_dom"/>
</dbReference>
<dbReference type="InterPro" id="IPR000059">
    <property type="entry name" value="NUDIX_hydrolase_NudL_CS"/>
</dbReference>
<dbReference type="InterPro" id="IPR023735">
    <property type="entry name" value="Nudix_NudL"/>
</dbReference>
<dbReference type="NCBIfam" id="NF007980">
    <property type="entry name" value="PRK10707.1"/>
    <property type="match status" value="1"/>
</dbReference>
<dbReference type="PANTHER" id="PTHR12992:SF11">
    <property type="entry name" value="MITOCHONDRIAL COENZYME A DIPHOSPHATASE NUDT8"/>
    <property type="match status" value="1"/>
</dbReference>
<dbReference type="PANTHER" id="PTHR12992">
    <property type="entry name" value="NUDIX HYDROLASE"/>
    <property type="match status" value="1"/>
</dbReference>
<dbReference type="Pfam" id="PF00293">
    <property type="entry name" value="NUDIX"/>
    <property type="match status" value="1"/>
</dbReference>
<dbReference type="SUPFAM" id="SSF55811">
    <property type="entry name" value="Nudix"/>
    <property type="match status" value="1"/>
</dbReference>
<dbReference type="PROSITE" id="PS51462">
    <property type="entry name" value="NUDIX"/>
    <property type="match status" value="1"/>
</dbReference>
<dbReference type="PROSITE" id="PS01293">
    <property type="entry name" value="NUDIX_COA"/>
    <property type="match status" value="1"/>
</dbReference>